<name>RS19_ARCFU</name>
<organism>
    <name type="scientific">Archaeoglobus fulgidus (strain ATCC 49558 / DSM 4304 / JCM 9628 / NBRC 100126 / VC-16)</name>
    <dbReference type="NCBI Taxonomy" id="224325"/>
    <lineage>
        <taxon>Archaea</taxon>
        <taxon>Methanobacteriati</taxon>
        <taxon>Methanobacteriota</taxon>
        <taxon>Archaeoglobi</taxon>
        <taxon>Archaeoglobales</taxon>
        <taxon>Archaeoglobaceae</taxon>
        <taxon>Archaeoglobus</taxon>
    </lineage>
</organism>
<proteinExistence type="inferred from homology"/>
<protein>
    <recommendedName>
        <fullName evidence="2">Small ribosomal subunit protein uS19</fullName>
    </recommendedName>
    <alternativeName>
        <fullName>30S ribosomal protein S19</fullName>
    </alternativeName>
</protein>
<dbReference type="EMBL" id="AE000782">
    <property type="protein sequence ID" value="AAB89353.1"/>
    <property type="molecule type" value="Genomic_DNA"/>
</dbReference>
<dbReference type="PIR" id="H69489">
    <property type="entry name" value="H69489"/>
</dbReference>
<dbReference type="SMR" id="O28358"/>
<dbReference type="STRING" id="224325.AF_1921"/>
<dbReference type="PaxDb" id="224325-AF_1921"/>
<dbReference type="EnsemblBacteria" id="AAB89353">
    <property type="protein sequence ID" value="AAB89353"/>
    <property type="gene ID" value="AF_1921"/>
</dbReference>
<dbReference type="KEGG" id="afu:AF_1921"/>
<dbReference type="eggNOG" id="arCOG04099">
    <property type="taxonomic scope" value="Archaea"/>
</dbReference>
<dbReference type="HOGENOM" id="CLU_097347_1_1_2"/>
<dbReference type="OrthoDB" id="30559at2157"/>
<dbReference type="PhylomeDB" id="O28358"/>
<dbReference type="Proteomes" id="UP000002199">
    <property type="component" value="Chromosome"/>
</dbReference>
<dbReference type="GO" id="GO:0022627">
    <property type="term" value="C:cytosolic small ribosomal subunit"/>
    <property type="evidence" value="ECO:0007669"/>
    <property type="project" value="TreeGrafter"/>
</dbReference>
<dbReference type="GO" id="GO:0019843">
    <property type="term" value="F:rRNA binding"/>
    <property type="evidence" value="ECO:0007669"/>
    <property type="project" value="UniProtKB-UniRule"/>
</dbReference>
<dbReference type="GO" id="GO:0003735">
    <property type="term" value="F:structural constituent of ribosome"/>
    <property type="evidence" value="ECO:0007669"/>
    <property type="project" value="InterPro"/>
</dbReference>
<dbReference type="GO" id="GO:0000028">
    <property type="term" value="P:ribosomal small subunit assembly"/>
    <property type="evidence" value="ECO:0007669"/>
    <property type="project" value="TreeGrafter"/>
</dbReference>
<dbReference type="GO" id="GO:0006412">
    <property type="term" value="P:translation"/>
    <property type="evidence" value="ECO:0007669"/>
    <property type="project" value="UniProtKB-UniRule"/>
</dbReference>
<dbReference type="FunFam" id="3.30.860.10:FF:000002">
    <property type="entry name" value="40S ribosomal protein S15"/>
    <property type="match status" value="1"/>
</dbReference>
<dbReference type="Gene3D" id="3.30.860.10">
    <property type="entry name" value="30s Ribosomal Protein S19, Chain A"/>
    <property type="match status" value="1"/>
</dbReference>
<dbReference type="HAMAP" id="MF_00531">
    <property type="entry name" value="Ribosomal_uS19"/>
    <property type="match status" value="1"/>
</dbReference>
<dbReference type="InterPro" id="IPR002222">
    <property type="entry name" value="Ribosomal_uS19"/>
</dbReference>
<dbReference type="InterPro" id="IPR020934">
    <property type="entry name" value="Ribosomal_uS19_CS"/>
</dbReference>
<dbReference type="InterPro" id="IPR005713">
    <property type="entry name" value="Ribosomal_uS19_euk/arc"/>
</dbReference>
<dbReference type="InterPro" id="IPR023575">
    <property type="entry name" value="Ribosomal_uS19_SF"/>
</dbReference>
<dbReference type="NCBIfam" id="NF003121">
    <property type="entry name" value="PRK04038.1"/>
    <property type="match status" value="1"/>
</dbReference>
<dbReference type="NCBIfam" id="TIGR01025">
    <property type="entry name" value="uS19_arch"/>
    <property type="match status" value="1"/>
</dbReference>
<dbReference type="PANTHER" id="PTHR11880">
    <property type="entry name" value="RIBOSOMAL PROTEIN S19P FAMILY MEMBER"/>
    <property type="match status" value="1"/>
</dbReference>
<dbReference type="PANTHER" id="PTHR11880:SF2">
    <property type="entry name" value="SMALL RIBOSOMAL SUBUNIT PROTEIN US19"/>
    <property type="match status" value="1"/>
</dbReference>
<dbReference type="Pfam" id="PF00203">
    <property type="entry name" value="Ribosomal_S19"/>
    <property type="match status" value="1"/>
</dbReference>
<dbReference type="PIRSF" id="PIRSF002144">
    <property type="entry name" value="Ribosomal_S19"/>
    <property type="match status" value="1"/>
</dbReference>
<dbReference type="PRINTS" id="PR00975">
    <property type="entry name" value="RIBOSOMALS19"/>
</dbReference>
<dbReference type="SUPFAM" id="SSF54570">
    <property type="entry name" value="Ribosomal protein S19"/>
    <property type="match status" value="1"/>
</dbReference>
<dbReference type="PROSITE" id="PS00323">
    <property type="entry name" value="RIBOSOMAL_S19"/>
    <property type="match status" value="1"/>
</dbReference>
<keyword id="KW-1185">Reference proteome</keyword>
<keyword id="KW-0687">Ribonucleoprotein</keyword>
<keyword id="KW-0689">Ribosomal protein</keyword>
<keyword id="KW-0694">RNA-binding</keyword>
<keyword id="KW-0699">rRNA-binding</keyword>
<feature type="chain" id="PRO_0000129998" description="Small ribosomal subunit protein uS19">
    <location>
        <begin position="1"/>
        <end position="133"/>
    </location>
</feature>
<sequence>MALKSKVIRPRDFKYRGYTLEELQKMPLEELAKLLPARERRKIKRGFTEQEEKLLRKLRKKGTARTHCRDMVVLPEMVGKVVFVHNGKEFVRVEIKPEMIGHRLGEFALTRRFEKHSGPGVGATRSSKYVPLK</sequence>
<evidence type="ECO:0000250" key="1"/>
<evidence type="ECO:0000305" key="2"/>
<gene>
    <name type="primary">rps19</name>
    <name type="ordered locus">AF_1921</name>
</gene>
<comment type="function">
    <text evidence="1">Protein S19 forms a complex with S13 that binds strongly to the 16S ribosomal RNA.</text>
</comment>
<comment type="similarity">
    <text evidence="2">Belongs to the universal ribosomal protein uS19 family.</text>
</comment>
<accession>O28358</accession>
<reference key="1">
    <citation type="journal article" date="1997" name="Nature">
        <title>The complete genome sequence of the hyperthermophilic, sulphate-reducing archaeon Archaeoglobus fulgidus.</title>
        <authorList>
            <person name="Klenk H.-P."/>
            <person name="Clayton R.A."/>
            <person name="Tomb J.-F."/>
            <person name="White O."/>
            <person name="Nelson K.E."/>
            <person name="Ketchum K.A."/>
            <person name="Dodson R.J."/>
            <person name="Gwinn M.L."/>
            <person name="Hickey E.K."/>
            <person name="Peterson J.D."/>
            <person name="Richardson D.L."/>
            <person name="Kerlavage A.R."/>
            <person name="Graham D.E."/>
            <person name="Kyrpides N.C."/>
            <person name="Fleischmann R.D."/>
            <person name="Quackenbush J."/>
            <person name="Lee N.H."/>
            <person name="Sutton G.G."/>
            <person name="Gill S.R."/>
            <person name="Kirkness E.F."/>
            <person name="Dougherty B.A."/>
            <person name="McKenney K."/>
            <person name="Adams M.D."/>
            <person name="Loftus B.J."/>
            <person name="Peterson S.N."/>
            <person name="Reich C.I."/>
            <person name="McNeil L.K."/>
            <person name="Badger J.H."/>
            <person name="Glodek A."/>
            <person name="Zhou L."/>
            <person name="Overbeek R."/>
            <person name="Gocayne J.D."/>
            <person name="Weidman J.F."/>
            <person name="McDonald L.A."/>
            <person name="Utterback T.R."/>
            <person name="Cotton M.D."/>
            <person name="Spriggs T."/>
            <person name="Artiach P."/>
            <person name="Kaine B.P."/>
            <person name="Sykes S.M."/>
            <person name="Sadow P.W."/>
            <person name="D'Andrea K.P."/>
            <person name="Bowman C."/>
            <person name="Fujii C."/>
            <person name="Garland S.A."/>
            <person name="Mason T.M."/>
            <person name="Olsen G.J."/>
            <person name="Fraser C.M."/>
            <person name="Smith H.O."/>
            <person name="Woese C.R."/>
            <person name="Venter J.C."/>
        </authorList>
    </citation>
    <scope>NUCLEOTIDE SEQUENCE [LARGE SCALE GENOMIC DNA]</scope>
    <source>
        <strain>ATCC 49558 / DSM 4304 / JCM 9628 / NBRC 100126 / VC-16</strain>
    </source>
</reference>